<feature type="chain" id="PRO_0000413786" description="Cell division protein ZapC">
    <location>
        <begin position="1"/>
        <end position="180"/>
    </location>
</feature>
<comment type="function">
    <text evidence="1">Contributes to the efficiency of the cell division process by stabilizing the polymeric form of the cell division protein FtsZ. Acts by promoting interactions between FtsZ protofilaments and suppressing the GTPase activity of FtsZ.</text>
</comment>
<comment type="subunit">
    <text evidence="1">Interacts directly with FtsZ.</text>
</comment>
<comment type="subcellular location">
    <subcellularLocation>
        <location evidence="1">Cytoplasm</location>
    </subcellularLocation>
</comment>
<comment type="similarity">
    <text evidence="1">Belongs to the ZapC family.</text>
</comment>
<sequence>MRIKPDDNWRWYYDEEHDRMMLDLANGMLFRSRFSRKMLTPDAFCPTGFCVDDAALYFSFEEKCRDFELTKEQRAELVLNALVAIRYLKPQMPKSWHFVAHGEMWTPGTGDAASVWLSDTAEQVNLLVVEPGENAALCLLAQPGVVIAGRTMQLGDAIKIMNDRLKPQVHCHSFSLEQAV</sequence>
<organism>
    <name type="scientific">Salmonella typhimurium (strain LT2 / SGSC1412 / ATCC 700720)</name>
    <dbReference type="NCBI Taxonomy" id="99287"/>
    <lineage>
        <taxon>Bacteria</taxon>
        <taxon>Pseudomonadati</taxon>
        <taxon>Pseudomonadota</taxon>
        <taxon>Gammaproteobacteria</taxon>
        <taxon>Enterobacterales</taxon>
        <taxon>Enterobacteriaceae</taxon>
        <taxon>Salmonella</taxon>
    </lineage>
</organism>
<name>ZAPC_SALTY</name>
<dbReference type="EMBL" id="AE006468">
    <property type="protein sequence ID" value="AAL19992.1"/>
    <property type="molecule type" value="Genomic_DNA"/>
</dbReference>
<dbReference type="RefSeq" id="WP_001220671.1">
    <property type="nucleotide sequence ID" value="NC_003197.2"/>
</dbReference>
<dbReference type="SMR" id="Q8ZQ75"/>
<dbReference type="STRING" id="99287.STM1059"/>
<dbReference type="PaxDb" id="99287-STM1059"/>
<dbReference type="KEGG" id="stm:STM1059"/>
<dbReference type="PATRIC" id="fig|99287.12.peg.1123"/>
<dbReference type="HOGENOM" id="CLU_128248_0_0_6"/>
<dbReference type="OMA" id="IKVMNDR"/>
<dbReference type="PhylomeDB" id="Q8ZQ75"/>
<dbReference type="BioCyc" id="SENT99287:STM1059-MONOMER"/>
<dbReference type="Proteomes" id="UP000001014">
    <property type="component" value="Chromosome"/>
</dbReference>
<dbReference type="GO" id="GO:0005737">
    <property type="term" value="C:cytoplasm"/>
    <property type="evidence" value="ECO:0007669"/>
    <property type="project" value="UniProtKB-SubCell"/>
</dbReference>
<dbReference type="GO" id="GO:0000917">
    <property type="term" value="P:division septum assembly"/>
    <property type="evidence" value="ECO:0007669"/>
    <property type="project" value="UniProtKB-KW"/>
</dbReference>
<dbReference type="GO" id="GO:0043093">
    <property type="term" value="P:FtsZ-dependent cytokinesis"/>
    <property type="evidence" value="ECO:0007669"/>
    <property type="project" value="UniProtKB-UniRule"/>
</dbReference>
<dbReference type="HAMAP" id="MF_00906">
    <property type="entry name" value="ZapC"/>
    <property type="match status" value="1"/>
</dbReference>
<dbReference type="InterPro" id="IPR009809">
    <property type="entry name" value="ZapC"/>
</dbReference>
<dbReference type="InterPro" id="IPR048372">
    <property type="entry name" value="ZapC_C"/>
</dbReference>
<dbReference type="InterPro" id="IPR048373">
    <property type="entry name" value="ZapC_N"/>
</dbReference>
<dbReference type="Pfam" id="PF07126">
    <property type="entry name" value="ZapC_C"/>
    <property type="match status" value="1"/>
</dbReference>
<dbReference type="Pfam" id="PF21083">
    <property type="entry name" value="ZapC_N"/>
    <property type="match status" value="1"/>
</dbReference>
<dbReference type="PIRSF" id="PIRSF010252">
    <property type="entry name" value="ZapC"/>
    <property type="match status" value="1"/>
</dbReference>
<gene>
    <name evidence="1" type="primary">zapC</name>
    <name type="ordered locus">STM1059</name>
</gene>
<proteinExistence type="inferred from homology"/>
<reference key="1">
    <citation type="journal article" date="2001" name="Nature">
        <title>Complete genome sequence of Salmonella enterica serovar Typhimurium LT2.</title>
        <authorList>
            <person name="McClelland M."/>
            <person name="Sanderson K.E."/>
            <person name="Spieth J."/>
            <person name="Clifton S.W."/>
            <person name="Latreille P."/>
            <person name="Courtney L."/>
            <person name="Porwollik S."/>
            <person name="Ali J."/>
            <person name="Dante M."/>
            <person name="Du F."/>
            <person name="Hou S."/>
            <person name="Layman D."/>
            <person name="Leonard S."/>
            <person name="Nguyen C."/>
            <person name="Scott K."/>
            <person name="Holmes A."/>
            <person name="Grewal N."/>
            <person name="Mulvaney E."/>
            <person name="Ryan E."/>
            <person name="Sun H."/>
            <person name="Florea L."/>
            <person name="Miller W."/>
            <person name="Stoneking T."/>
            <person name="Nhan M."/>
            <person name="Waterston R."/>
            <person name="Wilson R.K."/>
        </authorList>
    </citation>
    <scope>NUCLEOTIDE SEQUENCE [LARGE SCALE GENOMIC DNA]</scope>
    <source>
        <strain>LT2 / SGSC1412 / ATCC 700720</strain>
    </source>
</reference>
<keyword id="KW-0131">Cell cycle</keyword>
<keyword id="KW-0132">Cell division</keyword>
<keyword id="KW-0963">Cytoplasm</keyword>
<keyword id="KW-1185">Reference proteome</keyword>
<keyword id="KW-0717">Septation</keyword>
<accession>Q8ZQ75</accession>
<evidence type="ECO:0000255" key="1">
    <source>
        <dbReference type="HAMAP-Rule" id="MF_00906"/>
    </source>
</evidence>
<protein>
    <recommendedName>
        <fullName evidence="1">Cell division protein ZapC</fullName>
    </recommendedName>
</protein>